<reference key="1">
    <citation type="journal article" date="2004" name="Genome Res.">
        <title>The status, quality, and expansion of the NIH full-length cDNA project: the Mammalian Gene Collection (MGC).</title>
        <authorList>
            <consortium name="The MGC Project Team"/>
        </authorList>
    </citation>
    <scope>NUCLEOTIDE SEQUENCE [LARGE SCALE MRNA]</scope>
    <source>
        <tissue>Kidney</tissue>
    </source>
</reference>
<protein>
    <recommendedName>
        <fullName evidence="5">Protein FAM107B</fullName>
    </recommendedName>
</protein>
<sequence length="131" mass="15586">MAEPDYIEDDNPELIRPQKLINPVKTSRNHQDLHRELLMNQKRGLAPQNKPELQKVMEKRRRDQVIKQKEEEAQKKKSDLEIELLKRQQKLEQLELEKQKLQEEQENAPEFVKVKGNLRRTGQEVAQAQES</sequence>
<dbReference type="EMBL" id="BC085116">
    <property type="protein sequence ID" value="AAH85116.1"/>
    <property type="molecule type" value="mRNA"/>
</dbReference>
<dbReference type="RefSeq" id="NP_001020205.1">
    <property type="nucleotide sequence ID" value="NM_001025034.2"/>
</dbReference>
<dbReference type="RefSeq" id="NP_001388432.1">
    <property type="nucleotide sequence ID" value="NM_001401503.1"/>
</dbReference>
<dbReference type="RefSeq" id="XP_008770104.1">
    <property type="nucleotide sequence ID" value="XM_008771882.2"/>
</dbReference>
<dbReference type="RefSeq" id="XP_008770105.1">
    <property type="nucleotide sequence ID" value="XM_008771883.2"/>
</dbReference>
<dbReference type="RefSeq" id="XP_008770106.1">
    <property type="nucleotide sequence ID" value="XM_008771884.4"/>
</dbReference>
<dbReference type="RefSeq" id="XP_017456137.1">
    <property type="nucleotide sequence ID" value="XM_017600648.1"/>
</dbReference>
<dbReference type="RefSeq" id="XP_017456138.1">
    <property type="nucleotide sequence ID" value="XM_017600649.1"/>
</dbReference>
<dbReference type="RefSeq" id="XP_017456139.1">
    <property type="nucleotide sequence ID" value="XM_017600650.1"/>
</dbReference>
<dbReference type="RefSeq" id="XP_038951955.1">
    <property type="nucleotide sequence ID" value="XM_039096027.2"/>
</dbReference>
<dbReference type="RefSeq" id="XP_063132773.1">
    <property type="nucleotide sequence ID" value="XM_063276703.1"/>
</dbReference>
<dbReference type="RefSeq" id="XP_063132774.1">
    <property type="nucleotide sequence ID" value="XM_063276704.1"/>
</dbReference>
<dbReference type="SMR" id="Q5U4F3"/>
<dbReference type="FunCoup" id="Q5U4F3">
    <property type="interactions" value="1182"/>
</dbReference>
<dbReference type="iPTMnet" id="Q5U4F3"/>
<dbReference type="PhosphoSitePlus" id="Q5U4F3"/>
<dbReference type="PaxDb" id="10116-ENSRNOP00000020220"/>
<dbReference type="Ensembl" id="ENSRNOT00000105947.1">
    <property type="protein sequence ID" value="ENSRNOP00000085064.1"/>
    <property type="gene ID" value="ENSRNOG00000014886.6"/>
</dbReference>
<dbReference type="GeneID" id="498796"/>
<dbReference type="UCSC" id="RGD:1561482">
    <property type="organism name" value="rat"/>
</dbReference>
<dbReference type="AGR" id="RGD:1561482"/>
<dbReference type="CTD" id="83641"/>
<dbReference type="RGD" id="1561482">
    <property type="gene designation" value="Fam107b"/>
</dbReference>
<dbReference type="eggNOG" id="ENOG502RY4N">
    <property type="taxonomic scope" value="Eukaryota"/>
</dbReference>
<dbReference type="GeneTree" id="ENSGT00390000011228"/>
<dbReference type="HOGENOM" id="CLU_122902_0_0_1"/>
<dbReference type="InParanoid" id="Q5U4F3"/>
<dbReference type="OrthoDB" id="5963205at2759"/>
<dbReference type="PhylomeDB" id="Q5U4F3"/>
<dbReference type="TreeFam" id="TF325943"/>
<dbReference type="PRO" id="PR:Q5U4F3"/>
<dbReference type="Proteomes" id="UP000002494">
    <property type="component" value="Chromosome 17"/>
</dbReference>
<dbReference type="Bgee" id="ENSRNOG00000014886">
    <property type="expression patterns" value="Expressed in adult mammalian kidney and 19 other cell types or tissues"/>
</dbReference>
<dbReference type="ExpressionAtlas" id="Q5U4F3">
    <property type="expression patterns" value="baseline and differential"/>
</dbReference>
<dbReference type="GO" id="GO:0007605">
    <property type="term" value="P:sensory perception of sound"/>
    <property type="evidence" value="ECO:0000266"/>
    <property type="project" value="RGD"/>
</dbReference>
<dbReference type="InterPro" id="IPR009533">
    <property type="entry name" value="FAM107"/>
</dbReference>
<dbReference type="PANTHER" id="PTHR16768">
    <property type="entry name" value="DOWN REGULATED IN RENAL CARCINOMA 1/TU3A"/>
    <property type="match status" value="1"/>
</dbReference>
<dbReference type="PANTHER" id="PTHR16768:SF1">
    <property type="entry name" value="PROTEIN FAM107B"/>
    <property type="match status" value="1"/>
</dbReference>
<dbReference type="Pfam" id="PF06625">
    <property type="entry name" value="DUF1151"/>
    <property type="match status" value="1"/>
</dbReference>
<feature type="initiator methionine" description="Removed" evidence="2">
    <location>
        <position position="1"/>
    </location>
</feature>
<feature type="chain" id="PRO_0000230776" description="Protein FAM107B">
    <location>
        <begin position="2"/>
        <end position="131"/>
    </location>
</feature>
<feature type="region of interest" description="Disordered" evidence="4">
    <location>
        <begin position="39"/>
        <end position="78"/>
    </location>
</feature>
<feature type="region of interest" description="Disordered" evidence="4">
    <location>
        <begin position="100"/>
        <end position="131"/>
    </location>
</feature>
<feature type="coiled-coil region" evidence="3">
    <location>
        <begin position="61"/>
        <end position="112"/>
    </location>
</feature>
<feature type="compositionally biased region" description="Basic and acidic residues" evidence="4">
    <location>
        <begin position="52"/>
        <end position="78"/>
    </location>
</feature>
<feature type="modified residue" description="N-acetylalanine" evidence="2">
    <location>
        <position position="2"/>
    </location>
</feature>
<feature type="modified residue" description="N6-acetyllysine" evidence="1">
    <location>
        <position position="50"/>
    </location>
</feature>
<gene>
    <name evidence="6" type="primary">Fam107b</name>
</gene>
<name>F107B_RAT</name>
<proteinExistence type="evidence at transcript level"/>
<evidence type="ECO:0000250" key="1">
    <source>
        <dbReference type="UniProtKB" id="Q3TGF2"/>
    </source>
</evidence>
<evidence type="ECO:0000250" key="2">
    <source>
        <dbReference type="UniProtKB" id="Q9H098"/>
    </source>
</evidence>
<evidence type="ECO:0000255" key="3"/>
<evidence type="ECO:0000256" key="4">
    <source>
        <dbReference type="SAM" id="MobiDB-lite"/>
    </source>
</evidence>
<evidence type="ECO:0000305" key="5"/>
<evidence type="ECO:0000312" key="6">
    <source>
        <dbReference type="RGD" id="1561482"/>
    </source>
</evidence>
<keyword id="KW-0007">Acetylation</keyword>
<keyword id="KW-0175">Coiled coil</keyword>
<keyword id="KW-1185">Reference proteome</keyword>
<organism>
    <name type="scientific">Rattus norvegicus</name>
    <name type="common">Rat</name>
    <dbReference type="NCBI Taxonomy" id="10116"/>
    <lineage>
        <taxon>Eukaryota</taxon>
        <taxon>Metazoa</taxon>
        <taxon>Chordata</taxon>
        <taxon>Craniata</taxon>
        <taxon>Vertebrata</taxon>
        <taxon>Euteleostomi</taxon>
        <taxon>Mammalia</taxon>
        <taxon>Eutheria</taxon>
        <taxon>Euarchontoglires</taxon>
        <taxon>Glires</taxon>
        <taxon>Rodentia</taxon>
        <taxon>Myomorpha</taxon>
        <taxon>Muroidea</taxon>
        <taxon>Muridae</taxon>
        <taxon>Murinae</taxon>
        <taxon>Rattus</taxon>
    </lineage>
</organism>
<accession>Q5U4F3</accession>
<comment type="similarity">
    <text evidence="5">Belongs to the FAM107 family.</text>
</comment>